<name>RL6_BURPS</name>
<feature type="chain" id="PRO_0000265232" description="Large ribosomal subunit protein uL6">
    <location>
        <begin position="1"/>
        <end position="176"/>
    </location>
</feature>
<organism>
    <name type="scientific">Burkholderia pseudomallei (strain K96243)</name>
    <dbReference type="NCBI Taxonomy" id="272560"/>
    <lineage>
        <taxon>Bacteria</taxon>
        <taxon>Pseudomonadati</taxon>
        <taxon>Pseudomonadota</taxon>
        <taxon>Betaproteobacteria</taxon>
        <taxon>Burkholderiales</taxon>
        <taxon>Burkholderiaceae</taxon>
        <taxon>Burkholderia</taxon>
        <taxon>pseudomallei group</taxon>
    </lineage>
</organism>
<keyword id="KW-1185">Reference proteome</keyword>
<keyword id="KW-0687">Ribonucleoprotein</keyword>
<keyword id="KW-0689">Ribosomal protein</keyword>
<keyword id="KW-0694">RNA-binding</keyword>
<keyword id="KW-0699">rRNA-binding</keyword>
<protein>
    <recommendedName>
        <fullName evidence="1">Large ribosomal subunit protein uL6</fullName>
    </recommendedName>
    <alternativeName>
        <fullName evidence="2">50S ribosomal protein L6</fullName>
    </alternativeName>
</protein>
<dbReference type="EMBL" id="BX571965">
    <property type="protein sequence ID" value="CAH37209.1"/>
    <property type="molecule type" value="Genomic_DNA"/>
</dbReference>
<dbReference type="RefSeq" id="WP_004197947.1">
    <property type="nucleotide sequence ID" value="NZ_CP009538.1"/>
</dbReference>
<dbReference type="RefSeq" id="YP_109792.1">
    <property type="nucleotide sequence ID" value="NC_006350.1"/>
</dbReference>
<dbReference type="SMR" id="Q63Q26"/>
<dbReference type="STRING" id="272560.BPSL3198"/>
<dbReference type="GeneID" id="93061817"/>
<dbReference type="KEGG" id="bps:BPSL3198"/>
<dbReference type="PATRIC" id="fig|272560.51.peg.2040"/>
<dbReference type="eggNOG" id="COG0097">
    <property type="taxonomic scope" value="Bacteria"/>
</dbReference>
<dbReference type="Proteomes" id="UP000000605">
    <property type="component" value="Chromosome 1"/>
</dbReference>
<dbReference type="GO" id="GO:0022625">
    <property type="term" value="C:cytosolic large ribosomal subunit"/>
    <property type="evidence" value="ECO:0007669"/>
    <property type="project" value="TreeGrafter"/>
</dbReference>
<dbReference type="GO" id="GO:0019843">
    <property type="term" value="F:rRNA binding"/>
    <property type="evidence" value="ECO:0007669"/>
    <property type="project" value="UniProtKB-UniRule"/>
</dbReference>
<dbReference type="GO" id="GO:0003735">
    <property type="term" value="F:structural constituent of ribosome"/>
    <property type="evidence" value="ECO:0007669"/>
    <property type="project" value="InterPro"/>
</dbReference>
<dbReference type="GO" id="GO:0002181">
    <property type="term" value="P:cytoplasmic translation"/>
    <property type="evidence" value="ECO:0007669"/>
    <property type="project" value="TreeGrafter"/>
</dbReference>
<dbReference type="FunFam" id="3.90.930.12:FF:000001">
    <property type="entry name" value="50S ribosomal protein L6"/>
    <property type="match status" value="1"/>
</dbReference>
<dbReference type="Gene3D" id="3.90.930.12">
    <property type="entry name" value="Ribosomal protein L6, alpha-beta domain"/>
    <property type="match status" value="2"/>
</dbReference>
<dbReference type="HAMAP" id="MF_01365_B">
    <property type="entry name" value="Ribosomal_uL6_B"/>
    <property type="match status" value="1"/>
</dbReference>
<dbReference type="InterPro" id="IPR000702">
    <property type="entry name" value="Ribosomal_uL6-like"/>
</dbReference>
<dbReference type="InterPro" id="IPR036789">
    <property type="entry name" value="Ribosomal_uL6-like_a/b-dom_sf"/>
</dbReference>
<dbReference type="InterPro" id="IPR020040">
    <property type="entry name" value="Ribosomal_uL6_a/b-dom"/>
</dbReference>
<dbReference type="InterPro" id="IPR019906">
    <property type="entry name" value="Ribosomal_uL6_bac-type"/>
</dbReference>
<dbReference type="InterPro" id="IPR002358">
    <property type="entry name" value="Ribosomal_uL6_CS"/>
</dbReference>
<dbReference type="NCBIfam" id="TIGR03654">
    <property type="entry name" value="L6_bact"/>
    <property type="match status" value="1"/>
</dbReference>
<dbReference type="PANTHER" id="PTHR11655">
    <property type="entry name" value="60S/50S RIBOSOMAL PROTEIN L6/L9"/>
    <property type="match status" value="1"/>
</dbReference>
<dbReference type="PANTHER" id="PTHR11655:SF14">
    <property type="entry name" value="LARGE RIBOSOMAL SUBUNIT PROTEIN UL6M"/>
    <property type="match status" value="1"/>
</dbReference>
<dbReference type="Pfam" id="PF00347">
    <property type="entry name" value="Ribosomal_L6"/>
    <property type="match status" value="2"/>
</dbReference>
<dbReference type="PIRSF" id="PIRSF002162">
    <property type="entry name" value="Ribosomal_L6"/>
    <property type="match status" value="1"/>
</dbReference>
<dbReference type="PRINTS" id="PR00059">
    <property type="entry name" value="RIBOSOMALL6"/>
</dbReference>
<dbReference type="SUPFAM" id="SSF56053">
    <property type="entry name" value="Ribosomal protein L6"/>
    <property type="match status" value="2"/>
</dbReference>
<dbReference type="PROSITE" id="PS00525">
    <property type="entry name" value="RIBOSOMAL_L6_1"/>
    <property type="match status" value="1"/>
</dbReference>
<evidence type="ECO:0000255" key="1">
    <source>
        <dbReference type="HAMAP-Rule" id="MF_01365"/>
    </source>
</evidence>
<evidence type="ECO:0000305" key="2"/>
<proteinExistence type="inferred from homology"/>
<gene>
    <name evidence="1" type="primary">rplF</name>
    <name type="ordered locus">BPSL3198</name>
</gene>
<comment type="function">
    <text evidence="1">This protein binds to the 23S rRNA, and is important in its secondary structure. It is located near the subunit interface in the base of the L7/L12 stalk, and near the tRNA binding site of the peptidyltransferase center.</text>
</comment>
<comment type="subunit">
    <text evidence="1">Part of the 50S ribosomal subunit.</text>
</comment>
<comment type="similarity">
    <text evidence="1">Belongs to the universal ribosomal protein uL6 family.</text>
</comment>
<accession>Q63Q26</accession>
<reference key="1">
    <citation type="journal article" date="2004" name="Proc. Natl. Acad. Sci. U.S.A.">
        <title>Genomic plasticity of the causative agent of melioidosis, Burkholderia pseudomallei.</title>
        <authorList>
            <person name="Holden M.T.G."/>
            <person name="Titball R.W."/>
            <person name="Peacock S.J."/>
            <person name="Cerdeno-Tarraga A.-M."/>
            <person name="Atkins T."/>
            <person name="Crossman L.C."/>
            <person name="Pitt T."/>
            <person name="Churcher C."/>
            <person name="Mungall K.L."/>
            <person name="Bentley S.D."/>
            <person name="Sebaihia M."/>
            <person name="Thomson N.R."/>
            <person name="Bason N."/>
            <person name="Beacham I.R."/>
            <person name="Brooks K."/>
            <person name="Brown K.A."/>
            <person name="Brown N.F."/>
            <person name="Challis G.L."/>
            <person name="Cherevach I."/>
            <person name="Chillingworth T."/>
            <person name="Cronin A."/>
            <person name="Crossett B."/>
            <person name="Davis P."/>
            <person name="DeShazer D."/>
            <person name="Feltwell T."/>
            <person name="Fraser A."/>
            <person name="Hance Z."/>
            <person name="Hauser H."/>
            <person name="Holroyd S."/>
            <person name="Jagels K."/>
            <person name="Keith K.E."/>
            <person name="Maddison M."/>
            <person name="Moule S."/>
            <person name="Price C."/>
            <person name="Quail M.A."/>
            <person name="Rabbinowitsch E."/>
            <person name="Rutherford K."/>
            <person name="Sanders M."/>
            <person name="Simmonds M."/>
            <person name="Songsivilai S."/>
            <person name="Stevens K."/>
            <person name="Tumapa S."/>
            <person name="Vesaratchavest M."/>
            <person name="Whitehead S."/>
            <person name="Yeats C."/>
            <person name="Barrell B.G."/>
            <person name="Oyston P.C.F."/>
            <person name="Parkhill J."/>
        </authorList>
    </citation>
    <scope>NUCLEOTIDE SEQUENCE [LARGE SCALE GENOMIC DNA]</scope>
    <source>
        <strain>K96243</strain>
    </source>
</reference>
<sequence>MSRVGKSPIALQGAEVKLADGAITVKGPLGTITQAVNPLVNVANNDGTLNLSPVDDSREANALSGTMRAIIANAVHGVTKGFERKLTLVGVGYRAQAQGDKLNLSLGFSHPVVHQMPEGIKAETPTQTEIVIKGIDKQKVGQVAAEVRGYRPPEPYKGKGVRYADEVVILKETKKK</sequence>